<dbReference type="EMBL" id="M74569">
    <property type="protein sequence ID" value="AAA23245.1"/>
    <property type="molecule type" value="Genomic_DNA"/>
</dbReference>
<dbReference type="EMBL" id="AE001437">
    <property type="protein sequence ID" value="AAK79252.1"/>
    <property type="molecule type" value="Genomic_DNA"/>
</dbReference>
<dbReference type="PIR" id="A97058">
    <property type="entry name" value="A97058"/>
</dbReference>
<dbReference type="PIR" id="C41873">
    <property type="entry name" value="C41873"/>
</dbReference>
<dbReference type="RefSeq" id="NP_347912.1">
    <property type="nucleotide sequence ID" value="NC_003030.1"/>
</dbReference>
<dbReference type="RefSeq" id="WP_010964593.1">
    <property type="nucleotide sequence ID" value="NC_003030.1"/>
</dbReference>
<dbReference type="SMR" id="P30726"/>
<dbReference type="STRING" id="272562.CA_C1281"/>
<dbReference type="GeneID" id="44997787"/>
<dbReference type="KEGG" id="cac:CA_C1281"/>
<dbReference type="PATRIC" id="fig|272562.8.peg.1482"/>
<dbReference type="eggNOG" id="COG0576">
    <property type="taxonomic scope" value="Bacteria"/>
</dbReference>
<dbReference type="HOGENOM" id="CLU_057217_5_0_9"/>
<dbReference type="OrthoDB" id="9812586at2"/>
<dbReference type="Proteomes" id="UP000000814">
    <property type="component" value="Chromosome"/>
</dbReference>
<dbReference type="GO" id="GO:0005737">
    <property type="term" value="C:cytoplasm"/>
    <property type="evidence" value="ECO:0007669"/>
    <property type="project" value="UniProtKB-SubCell"/>
</dbReference>
<dbReference type="GO" id="GO:0000774">
    <property type="term" value="F:adenyl-nucleotide exchange factor activity"/>
    <property type="evidence" value="ECO:0007669"/>
    <property type="project" value="InterPro"/>
</dbReference>
<dbReference type="GO" id="GO:0042803">
    <property type="term" value="F:protein homodimerization activity"/>
    <property type="evidence" value="ECO:0007669"/>
    <property type="project" value="InterPro"/>
</dbReference>
<dbReference type="GO" id="GO:0051087">
    <property type="term" value="F:protein-folding chaperone binding"/>
    <property type="evidence" value="ECO:0007669"/>
    <property type="project" value="InterPro"/>
</dbReference>
<dbReference type="GO" id="GO:0051082">
    <property type="term" value="F:unfolded protein binding"/>
    <property type="evidence" value="ECO:0007669"/>
    <property type="project" value="TreeGrafter"/>
</dbReference>
<dbReference type="GO" id="GO:0006457">
    <property type="term" value="P:protein folding"/>
    <property type="evidence" value="ECO:0007669"/>
    <property type="project" value="InterPro"/>
</dbReference>
<dbReference type="CDD" id="cd00446">
    <property type="entry name" value="GrpE"/>
    <property type="match status" value="1"/>
</dbReference>
<dbReference type="FunFam" id="2.30.22.10:FF:000001">
    <property type="entry name" value="Protein GrpE"/>
    <property type="match status" value="1"/>
</dbReference>
<dbReference type="Gene3D" id="3.90.20.20">
    <property type="match status" value="1"/>
</dbReference>
<dbReference type="Gene3D" id="2.30.22.10">
    <property type="entry name" value="Head domain of nucleotide exchange factor GrpE"/>
    <property type="match status" value="1"/>
</dbReference>
<dbReference type="HAMAP" id="MF_01151">
    <property type="entry name" value="GrpE"/>
    <property type="match status" value="1"/>
</dbReference>
<dbReference type="InterPro" id="IPR000740">
    <property type="entry name" value="GrpE"/>
</dbReference>
<dbReference type="InterPro" id="IPR013805">
    <property type="entry name" value="GrpE_coiled_coil"/>
</dbReference>
<dbReference type="InterPro" id="IPR009012">
    <property type="entry name" value="GrpE_head"/>
</dbReference>
<dbReference type="NCBIfam" id="NF010738">
    <property type="entry name" value="PRK14140.1"/>
    <property type="match status" value="1"/>
</dbReference>
<dbReference type="NCBIfam" id="NF010757">
    <property type="entry name" value="PRK14160.1"/>
    <property type="match status" value="1"/>
</dbReference>
<dbReference type="PANTHER" id="PTHR21237">
    <property type="entry name" value="GRPE PROTEIN"/>
    <property type="match status" value="1"/>
</dbReference>
<dbReference type="PANTHER" id="PTHR21237:SF23">
    <property type="entry name" value="GRPE PROTEIN HOMOLOG, MITOCHONDRIAL"/>
    <property type="match status" value="1"/>
</dbReference>
<dbReference type="Pfam" id="PF01025">
    <property type="entry name" value="GrpE"/>
    <property type="match status" value="1"/>
</dbReference>
<dbReference type="PRINTS" id="PR00773">
    <property type="entry name" value="GRPEPROTEIN"/>
</dbReference>
<dbReference type="SUPFAM" id="SSF58014">
    <property type="entry name" value="Coiled-coil domain of nucleotide exchange factor GrpE"/>
    <property type="match status" value="1"/>
</dbReference>
<dbReference type="SUPFAM" id="SSF51064">
    <property type="entry name" value="Head domain of nucleotide exchange factor GrpE"/>
    <property type="match status" value="1"/>
</dbReference>
<dbReference type="PROSITE" id="PS01071">
    <property type="entry name" value="GRPE"/>
    <property type="match status" value="1"/>
</dbReference>
<sequence length="200" mass="22662">MQEKDSKDVTMEDEETIASQEEIEVEGNSEESSKEEESNNSEISDENLSEENLKLKDENEKLKNELDAAKDRLLRLSAEYENYRNRTAKEKEGIYTDACSDVINEMLPTLDNLERAASTEGSAEDIKKGVEMVVKQFKNSLSKLGIEEIPSEGKFDPNLHNAVMHIEDEGYGENEVVEVLQKGYKRGDKVLRHSMVKVAN</sequence>
<feature type="chain" id="PRO_0000113773" description="Protein GrpE">
    <location>
        <begin position="1"/>
        <end position="200"/>
    </location>
</feature>
<feature type="region of interest" description="Disordered" evidence="2">
    <location>
        <begin position="1"/>
        <end position="57"/>
    </location>
</feature>
<feature type="compositionally biased region" description="Basic and acidic residues" evidence="2">
    <location>
        <begin position="1"/>
        <end position="10"/>
    </location>
</feature>
<feature type="compositionally biased region" description="Acidic residues" evidence="2">
    <location>
        <begin position="11"/>
        <end position="29"/>
    </location>
</feature>
<reference key="1">
    <citation type="journal article" date="1992" name="J. Bacteriol.">
        <title>Molecular characterization of the dnaK gene region of Clostridium acetobutylicum, including grpE, dnaJ, and a new heat shock gene.</title>
        <authorList>
            <person name="Narberhaus F."/>
            <person name="Giebeler K."/>
            <person name="Bahl H."/>
        </authorList>
    </citation>
    <scope>NUCLEOTIDE SEQUENCE [GENOMIC DNA]</scope>
    <source>
        <strain>ATCC 4259 / DSM 1731 / NCIB 619</strain>
    </source>
</reference>
<reference key="2">
    <citation type="journal article" date="2001" name="J. Bacteriol.">
        <title>Genome sequence and comparative analysis of the solvent-producing bacterium Clostridium acetobutylicum.</title>
        <authorList>
            <person name="Noelling J."/>
            <person name="Breton G."/>
            <person name="Omelchenko M.V."/>
            <person name="Makarova K.S."/>
            <person name="Zeng Q."/>
            <person name="Gibson R."/>
            <person name="Lee H.M."/>
            <person name="Dubois J."/>
            <person name="Qiu D."/>
            <person name="Hitti J."/>
            <person name="Wolf Y.I."/>
            <person name="Tatusov R.L."/>
            <person name="Sabathe F."/>
            <person name="Doucette-Stamm L.A."/>
            <person name="Soucaille P."/>
            <person name="Daly M.J."/>
            <person name="Bennett G.N."/>
            <person name="Koonin E.V."/>
            <person name="Smith D.R."/>
        </authorList>
    </citation>
    <scope>NUCLEOTIDE SEQUENCE [LARGE SCALE GENOMIC DNA]</scope>
    <source>
        <strain>ATCC 824 / DSM 792 / JCM 1419 / IAM 19013 / LMG 5710 / NBRC 13948 / NRRL B-527 / VKM B-1787 / 2291 / W</strain>
    </source>
</reference>
<proteinExistence type="inferred from homology"/>
<organism>
    <name type="scientific">Clostridium acetobutylicum (strain ATCC 824 / DSM 792 / JCM 1419 / IAM 19013 / LMG 5710 / NBRC 13948 / NRRL B-527 / VKM B-1787 / 2291 / W)</name>
    <dbReference type="NCBI Taxonomy" id="272562"/>
    <lineage>
        <taxon>Bacteria</taxon>
        <taxon>Bacillati</taxon>
        <taxon>Bacillota</taxon>
        <taxon>Clostridia</taxon>
        <taxon>Eubacteriales</taxon>
        <taxon>Clostridiaceae</taxon>
        <taxon>Clostridium</taxon>
    </lineage>
</organism>
<accession>P30726</accession>
<gene>
    <name evidence="1" type="primary">grpE</name>
    <name type="ordered locus">CA_C1281</name>
</gene>
<comment type="function">
    <text evidence="1">Participates actively in the response to hyperosmotic and heat shock by preventing the aggregation of stress-denatured proteins, in association with DnaK and GrpE. It is the nucleotide exchange factor for DnaK and may function as a thermosensor. Unfolded proteins bind initially to DnaJ; upon interaction with the DnaJ-bound protein, DnaK hydrolyzes its bound ATP, resulting in the formation of a stable complex. GrpE releases ADP from DnaK; ATP binding to DnaK triggers the release of the substrate protein, thus completing the reaction cycle. Several rounds of ATP-dependent interactions between DnaJ, DnaK and GrpE are required for fully efficient folding.</text>
</comment>
<comment type="subunit">
    <text evidence="1">Homodimer.</text>
</comment>
<comment type="subcellular location">
    <subcellularLocation>
        <location evidence="1">Cytoplasm</location>
    </subcellularLocation>
</comment>
<comment type="similarity">
    <text evidence="1">Belongs to the GrpE family.</text>
</comment>
<evidence type="ECO:0000255" key="1">
    <source>
        <dbReference type="HAMAP-Rule" id="MF_01151"/>
    </source>
</evidence>
<evidence type="ECO:0000256" key="2">
    <source>
        <dbReference type="SAM" id="MobiDB-lite"/>
    </source>
</evidence>
<keyword id="KW-0143">Chaperone</keyword>
<keyword id="KW-0963">Cytoplasm</keyword>
<keyword id="KW-1185">Reference proteome</keyword>
<keyword id="KW-0346">Stress response</keyword>
<name>GRPE_CLOAB</name>
<protein>
    <recommendedName>
        <fullName evidence="1">Protein GrpE</fullName>
    </recommendedName>
    <alternativeName>
        <fullName evidence="1">HSP-70 cofactor</fullName>
    </alternativeName>
</protein>